<name>UVRA_STAAM</name>
<accession>P63382</accession>
<accession>Q99VL6</accession>
<reference key="1">
    <citation type="journal article" date="2001" name="Lancet">
        <title>Whole genome sequencing of meticillin-resistant Staphylococcus aureus.</title>
        <authorList>
            <person name="Kuroda M."/>
            <person name="Ohta T."/>
            <person name="Uchiyama I."/>
            <person name="Baba T."/>
            <person name="Yuzawa H."/>
            <person name="Kobayashi I."/>
            <person name="Cui L."/>
            <person name="Oguchi A."/>
            <person name="Aoki K."/>
            <person name="Nagai Y."/>
            <person name="Lian J.-Q."/>
            <person name="Ito T."/>
            <person name="Kanamori M."/>
            <person name="Matsumaru H."/>
            <person name="Maruyama A."/>
            <person name="Murakami H."/>
            <person name="Hosoyama A."/>
            <person name="Mizutani-Ui Y."/>
            <person name="Takahashi N.K."/>
            <person name="Sawano T."/>
            <person name="Inoue R."/>
            <person name="Kaito C."/>
            <person name="Sekimizu K."/>
            <person name="Hirakawa H."/>
            <person name="Kuhara S."/>
            <person name="Goto S."/>
            <person name="Yabuzaki J."/>
            <person name="Kanehisa M."/>
            <person name="Yamashita A."/>
            <person name="Oshima K."/>
            <person name="Furuya K."/>
            <person name="Yoshino C."/>
            <person name="Shiba T."/>
            <person name="Hattori M."/>
            <person name="Ogasawara N."/>
            <person name="Hayashi H."/>
            <person name="Hiramatsu K."/>
        </authorList>
    </citation>
    <scope>NUCLEOTIDE SEQUENCE [LARGE SCALE GENOMIC DNA]</scope>
    <source>
        <strain>Mu50 / ATCC 700699</strain>
    </source>
</reference>
<dbReference type="EMBL" id="BA000017">
    <property type="protein sequence ID" value="BAB56921.1"/>
    <property type="molecule type" value="Genomic_DNA"/>
</dbReference>
<dbReference type="RefSeq" id="WP_000662676.1">
    <property type="nucleotide sequence ID" value="NC_002758.2"/>
</dbReference>
<dbReference type="SMR" id="P63382"/>
<dbReference type="KEGG" id="sav:SAV0759"/>
<dbReference type="HOGENOM" id="CLU_001370_0_2_9"/>
<dbReference type="PhylomeDB" id="P63382"/>
<dbReference type="Proteomes" id="UP000002481">
    <property type="component" value="Chromosome"/>
</dbReference>
<dbReference type="GO" id="GO:0005737">
    <property type="term" value="C:cytoplasm"/>
    <property type="evidence" value="ECO:0007669"/>
    <property type="project" value="UniProtKB-SubCell"/>
</dbReference>
<dbReference type="GO" id="GO:0009380">
    <property type="term" value="C:excinuclease repair complex"/>
    <property type="evidence" value="ECO:0007669"/>
    <property type="project" value="InterPro"/>
</dbReference>
<dbReference type="GO" id="GO:0005524">
    <property type="term" value="F:ATP binding"/>
    <property type="evidence" value="ECO:0007669"/>
    <property type="project" value="UniProtKB-UniRule"/>
</dbReference>
<dbReference type="GO" id="GO:0016887">
    <property type="term" value="F:ATP hydrolysis activity"/>
    <property type="evidence" value="ECO:0007669"/>
    <property type="project" value="InterPro"/>
</dbReference>
<dbReference type="GO" id="GO:0003677">
    <property type="term" value="F:DNA binding"/>
    <property type="evidence" value="ECO:0007669"/>
    <property type="project" value="UniProtKB-UniRule"/>
</dbReference>
<dbReference type="GO" id="GO:0009381">
    <property type="term" value="F:excinuclease ABC activity"/>
    <property type="evidence" value="ECO:0007669"/>
    <property type="project" value="UniProtKB-UniRule"/>
</dbReference>
<dbReference type="GO" id="GO:0008270">
    <property type="term" value="F:zinc ion binding"/>
    <property type="evidence" value="ECO:0007669"/>
    <property type="project" value="UniProtKB-UniRule"/>
</dbReference>
<dbReference type="GO" id="GO:0006289">
    <property type="term" value="P:nucleotide-excision repair"/>
    <property type="evidence" value="ECO:0007669"/>
    <property type="project" value="UniProtKB-UniRule"/>
</dbReference>
<dbReference type="GO" id="GO:0009432">
    <property type="term" value="P:SOS response"/>
    <property type="evidence" value="ECO:0007669"/>
    <property type="project" value="UniProtKB-UniRule"/>
</dbReference>
<dbReference type="CDD" id="cd03270">
    <property type="entry name" value="ABC_UvrA_I"/>
    <property type="match status" value="1"/>
</dbReference>
<dbReference type="CDD" id="cd03271">
    <property type="entry name" value="ABC_UvrA_II"/>
    <property type="match status" value="1"/>
</dbReference>
<dbReference type="FunFam" id="1.20.1580.10:FF:000002">
    <property type="entry name" value="UvrABC system protein A"/>
    <property type="match status" value="1"/>
</dbReference>
<dbReference type="FunFam" id="3.40.50.300:FF:000028">
    <property type="entry name" value="UvrABC system protein A"/>
    <property type="match status" value="1"/>
</dbReference>
<dbReference type="Gene3D" id="3.30.190.20">
    <property type="match status" value="1"/>
</dbReference>
<dbReference type="Gene3D" id="1.10.8.280">
    <property type="entry name" value="ABC transporter ATPase domain-like"/>
    <property type="match status" value="1"/>
</dbReference>
<dbReference type="Gene3D" id="1.20.1580.10">
    <property type="entry name" value="ABC transporter ATPase like domain"/>
    <property type="match status" value="3"/>
</dbReference>
<dbReference type="Gene3D" id="3.40.50.300">
    <property type="entry name" value="P-loop containing nucleotide triphosphate hydrolases"/>
    <property type="match status" value="3"/>
</dbReference>
<dbReference type="HAMAP" id="MF_00205">
    <property type="entry name" value="UvrA"/>
    <property type="match status" value="1"/>
</dbReference>
<dbReference type="InterPro" id="IPR003439">
    <property type="entry name" value="ABC_transporter-like_ATP-bd"/>
</dbReference>
<dbReference type="InterPro" id="IPR017871">
    <property type="entry name" value="ABC_transporter-like_CS"/>
</dbReference>
<dbReference type="InterPro" id="IPR027417">
    <property type="entry name" value="P-loop_NTPase"/>
</dbReference>
<dbReference type="InterPro" id="IPR004602">
    <property type="entry name" value="UvrA"/>
</dbReference>
<dbReference type="InterPro" id="IPR041552">
    <property type="entry name" value="UvrA_DNA-bd"/>
</dbReference>
<dbReference type="InterPro" id="IPR041102">
    <property type="entry name" value="UvrA_inter"/>
</dbReference>
<dbReference type="NCBIfam" id="NF001503">
    <property type="entry name" value="PRK00349.1"/>
    <property type="match status" value="1"/>
</dbReference>
<dbReference type="NCBIfam" id="TIGR00630">
    <property type="entry name" value="uvra"/>
    <property type="match status" value="1"/>
</dbReference>
<dbReference type="PANTHER" id="PTHR43152">
    <property type="entry name" value="UVRABC SYSTEM PROTEIN A"/>
    <property type="match status" value="1"/>
</dbReference>
<dbReference type="PANTHER" id="PTHR43152:SF3">
    <property type="entry name" value="UVRABC SYSTEM PROTEIN A"/>
    <property type="match status" value="1"/>
</dbReference>
<dbReference type="Pfam" id="PF17755">
    <property type="entry name" value="UvrA_DNA-bind"/>
    <property type="match status" value="1"/>
</dbReference>
<dbReference type="Pfam" id="PF17760">
    <property type="entry name" value="UvrA_inter"/>
    <property type="match status" value="1"/>
</dbReference>
<dbReference type="SUPFAM" id="SSF52540">
    <property type="entry name" value="P-loop containing nucleoside triphosphate hydrolases"/>
    <property type="match status" value="2"/>
</dbReference>
<dbReference type="PROSITE" id="PS00211">
    <property type="entry name" value="ABC_TRANSPORTER_1"/>
    <property type="match status" value="2"/>
</dbReference>
<dbReference type="PROSITE" id="PS50893">
    <property type="entry name" value="ABC_TRANSPORTER_2"/>
    <property type="match status" value="1"/>
</dbReference>
<comment type="function">
    <text evidence="1">The UvrABC repair system catalyzes the recognition and processing of DNA lesions. UvrA is an ATPase and a DNA-binding protein. A damage recognition complex composed of 2 UvrA and 2 UvrB subunits scans DNA for abnormalities. When the presence of a lesion has been verified by UvrB, the UvrA molecules dissociate.</text>
</comment>
<comment type="subunit">
    <text evidence="1">Forms a heterotetramer with UvrB during the search for lesions.</text>
</comment>
<comment type="subcellular location">
    <subcellularLocation>
        <location evidence="1">Cytoplasm</location>
    </subcellularLocation>
</comment>
<comment type="similarity">
    <text evidence="1">Belongs to the ABC transporter superfamily. UvrA family.</text>
</comment>
<sequence>MKEPSIVVKGARAHNLKDIDIELPKNKLIVMTGLSGSGKSSLAFDTIYAEGQRRYVESLSAYARQFLGQMDKPDVDTIEGLSPAISIDQKTTSKNPRSTVATVTEIYDYIRLLYARVGKPYCPNHNIEIESQTVQQMVDRIMELEARTKIQLLAPVIAHRKGSHEKLIEDIGKKGYVRLRIDGEIVDVNDVPTLDKNKNHTIEVVVDRLVVKDGIETRLADSIETALELSEGQLTVDVIDGEDLKFSESHACPICGFSIGELEPRMFSFNSPFGACPTCDGLGQKLTVDVDLVVPDKDKTLNEGAIEPWIPTSSDFYPTLLKRVCEVYKINMDKPFKKLTERQRDILLYGSGDKEIEFTFTQRQGGTRKRTMVFEGVVPNISRRFHESPSEYTREMMSKYMTELPCETCHGKRLSREALSVYVGGLNIGEVVEYSISQALNYYKNIDLSEQDQAIANQILKEIISRLTFLNNVGLEYLTLNRASGTLSGGEAQRIRLATQIGSRLTGVLYVLDEPSIGLHQRDNDRLINTLKEMRDLGNTLIVVEHDDDTMRAADYLVDIGPGAGEHGGQIVSSGTPQKVMKDKKSLTGQYLSGKKRIDVPEYRRPASDRKISIRGARSNNLKGIDVDIPLSIMTVVTGVSGSGKSSLVNEVLYKSLAQKINKSKVKPGLYDKIEGIDQLDKIIDIDQSPIGRTPRSNPATYTGVFDDIRDVFAQTNEAKIRGYQKGRFSFNVKGGRCEACKGDGIIKIEMHFLPDVYVPCEVCDGKRYNRETLEVTYKGKNIADILEMTVEEATQFFENIPKIKRKLQTLVDVGLGYVTLGQQATTLSGGEAQRVKLASELHKRSTGKSIYILDELTTGLHVDDISRLLKVLNRLVENGDTVVIIEHNLDVIKTADYIIDLGPEGGSGGGTIVATGTPEDIAQTKSSYTGKYLKEVLERDKQNTEDK</sequence>
<proteinExistence type="inferred from homology"/>
<protein>
    <recommendedName>
        <fullName evidence="1">UvrABC system protein A</fullName>
        <shortName evidence="1">UvrA protein</shortName>
    </recommendedName>
    <alternativeName>
        <fullName evidence="1">Excinuclease ABC subunit A</fullName>
    </alternativeName>
</protein>
<gene>
    <name evidence="1" type="primary">uvrA</name>
    <name type="ordered locus">SAV0759</name>
</gene>
<keyword id="KW-0067">ATP-binding</keyword>
<keyword id="KW-0963">Cytoplasm</keyword>
<keyword id="KW-0227">DNA damage</keyword>
<keyword id="KW-0228">DNA excision</keyword>
<keyword id="KW-0234">DNA repair</keyword>
<keyword id="KW-0238">DNA-binding</keyword>
<keyword id="KW-0267">Excision nuclease</keyword>
<keyword id="KW-0479">Metal-binding</keyword>
<keyword id="KW-0547">Nucleotide-binding</keyword>
<keyword id="KW-0677">Repeat</keyword>
<keyword id="KW-0742">SOS response</keyword>
<keyword id="KW-0862">Zinc</keyword>
<keyword id="KW-0863">Zinc-finger</keyword>
<evidence type="ECO:0000255" key="1">
    <source>
        <dbReference type="HAMAP-Rule" id="MF_00205"/>
    </source>
</evidence>
<feature type="chain" id="PRO_0000093090" description="UvrABC system protein A">
    <location>
        <begin position="1"/>
        <end position="948"/>
    </location>
</feature>
<feature type="domain" description="ABC transporter 1" evidence="1">
    <location>
        <begin position="309"/>
        <end position="587"/>
    </location>
</feature>
<feature type="domain" description="ABC transporter 2" evidence="1">
    <location>
        <begin position="607"/>
        <end position="935"/>
    </location>
</feature>
<feature type="zinc finger region" description="C4-type" evidence="1">
    <location>
        <begin position="252"/>
        <end position="279"/>
    </location>
</feature>
<feature type="zinc finger region" description="C4-type" evidence="1">
    <location>
        <begin position="738"/>
        <end position="764"/>
    </location>
</feature>
<feature type="binding site" evidence="1">
    <location>
        <begin position="33"/>
        <end position="40"/>
    </location>
    <ligand>
        <name>ATP</name>
        <dbReference type="ChEBI" id="CHEBI:30616"/>
    </ligand>
</feature>
<feature type="binding site" evidence="1">
    <location>
        <begin position="639"/>
        <end position="646"/>
    </location>
    <ligand>
        <name>ATP</name>
        <dbReference type="ChEBI" id="CHEBI:30616"/>
    </ligand>
</feature>
<organism>
    <name type="scientific">Staphylococcus aureus (strain Mu50 / ATCC 700699)</name>
    <dbReference type="NCBI Taxonomy" id="158878"/>
    <lineage>
        <taxon>Bacteria</taxon>
        <taxon>Bacillati</taxon>
        <taxon>Bacillota</taxon>
        <taxon>Bacilli</taxon>
        <taxon>Bacillales</taxon>
        <taxon>Staphylococcaceae</taxon>
        <taxon>Staphylococcus</taxon>
    </lineage>
</organism>